<name>RPC2B_CHLRE</name>
<evidence type="ECO:0000250" key="1"/>
<evidence type="ECO:0000250" key="2">
    <source>
        <dbReference type="UniProtKB" id="P0A8T7"/>
    </source>
</evidence>
<evidence type="ECO:0000305" key="3"/>
<gene>
    <name type="primary">rpoC1B</name>
</gene>
<geneLocation type="chloroplast"/>
<sequence>MSGQFTISDLNRLYQRIIYRNERLKKFLKDPALSSSFEMKYAQRLLQEAVDNLIQNGKSGVVPEKDARGRLLKSLSDILKGKQGRFRQYLLGKRVDYSGRSVIVVGPRLRLHECGIPKEMALVLYSPFLIKRILNEKLADTYLSAKKLIRTNPLLVSQLLREIMKSCPVLLNRAPTLHRLGFQAFQPKLVDGKAILLHPLVCPAFNADFDGDQMAVHVPITFEARAEAWKLMLARNNLLSPATGEPLILPSQDMVLGCYYLTTNCAEKWSKLKKGSGMYFHNIHEVLKAYNQHLIHLHAVIWVNIQGHLETANNIEQPLEIRIPLNQKYFYSQKGSYTALAGRPWQLLLREDAYSSNGLIAEANAGNLPQINVAEGEVNKNILDLRYLNLNYMEIYSKTHNLLNVNHSTLVAQRGQIKDNIHLPQLTTQIIRTTPGKILFNIIVKNAIEKRPKLLSKSNFKGGFIKNKLVNAIDQEIDNYFIRKNTALS</sequence>
<comment type="function">
    <text evidence="1">DNA-dependent RNA polymerase catalyzes the transcription of DNA into RNA using the four ribonucleoside triphosphates as substrates.</text>
</comment>
<comment type="catalytic activity">
    <reaction evidence="2">
        <text>RNA(n) + a ribonucleoside 5'-triphosphate = RNA(n+1) + diphosphate</text>
        <dbReference type="Rhea" id="RHEA:21248"/>
        <dbReference type="Rhea" id="RHEA-COMP:14527"/>
        <dbReference type="Rhea" id="RHEA-COMP:17342"/>
        <dbReference type="ChEBI" id="CHEBI:33019"/>
        <dbReference type="ChEBI" id="CHEBI:61557"/>
        <dbReference type="ChEBI" id="CHEBI:140395"/>
        <dbReference type="EC" id="2.7.7.6"/>
    </reaction>
</comment>
<comment type="cofactor">
    <cofactor evidence="2">
        <name>Mg(2+)</name>
        <dbReference type="ChEBI" id="CHEBI:18420"/>
    </cofactor>
    <text evidence="2">Binds 1 Mg(2+) ion per subunit.</text>
</comment>
<comment type="subunit">
    <text evidence="1">In plastids the minimal PEP RNA polymerase catalytic core is composed of four subunits: alpha, beta, beta', and beta''. When a (nuclear-encoded) sigma factor is associated with the core the holoenzyme is formed, which can initiate transcription (By similarity).</text>
</comment>
<comment type="subcellular location">
    <subcellularLocation>
        <location>Plastid</location>
        <location>Chloroplast</location>
    </subcellularLocation>
</comment>
<comment type="miscellaneous">
    <text>In C.reinhardtii the gene for this protein is split in two.</text>
</comment>
<comment type="similarity">
    <text evidence="3">Belongs to the RNA polymerase beta' chain family. RpoC1 subfamily.</text>
</comment>
<dbReference type="EC" id="2.7.7.6"/>
<dbReference type="EMBL" id="AF541870">
    <property type="protein sequence ID" value="AAN17821.1"/>
    <property type="molecule type" value="Genomic_DNA"/>
</dbReference>
<dbReference type="EMBL" id="FJ423446">
    <property type="protein sequence ID" value="ACJ50156.1"/>
    <property type="molecule type" value="Genomic_DNA"/>
</dbReference>
<dbReference type="EMBL" id="BK000554">
    <property type="protein sequence ID" value="DAA00969.1"/>
    <property type="molecule type" value="Genomic_DNA"/>
</dbReference>
<dbReference type="RefSeq" id="NP_958425.1">
    <property type="nucleotide sequence ID" value="NC_005353.1"/>
</dbReference>
<dbReference type="SMR" id="Q8HUH0"/>
<dbReference type="STRING" id="3055.Q8HUH0"/>
<dbReference type="PaxDb" id="3055-DAA00969"/>
<dbReference type="GeneID" id="2717049"/>
<dbReference type="KEGG" id="cre:ChreCp069"/>
<dbReference type="eggNOG" id="ENOG502QPYA">
    <property type="taxonomic scope" value="Eukaryota"/>
</dbReference>
<dbReference type="HOGENOM" id="CLU_558214_0_0_1"/>
<dbReference type="InParanoid" id="Q8HUH0"/>
<dbReference type="Proteomes" id="UP000006906">
    <property type="component" value="Chloroplast"/>
</dbReference>
<dbReference type="GO" id="GO:0009507">
    <property type="term" value="C:chloroplast"/>
    <property type="evidence" value="ECO:0007669"/>
    <property type="project" value="UniProtKB-SubCell"/>
</dbReference>
<dbReference type="GO" id="GO:0000428">
    <property type="term" value="C:DNA-directed RNA polymerase complex"/>
    <property type="evidence" value="ECO:0007669"/>
    <property type="project" value="UniProtKB-KW"/>
</dbReference>
<dbReference type="GO" id="GO:0005739">
    <property type="term" value="C:mitochondrion"/>
    <property type="evidence" value="ECO:0007669"/>
    <property type="project" value="GOC"/>
</dbReference>
<dbReference type="GO" id="GO:0003677">
    <property type="term" value="F:DNA binding"/>
    <property type="evidence" value="ECO:0007669"/>
    <property type="project" value="InterPro"/>
</dbReference>
<dbReference type="GO" id="GO:0003899">
    <property type="term" value="F:DNA-directed RNA polymerase activity"/>
    <property type="evidence" value="ECO:0007669"/>
    <property type="project" value="UniProtKB-EC"/>
</dbReference>
<dbReference type="GO" id="GO:0046872">
    <property type="term" value="F:metal ion binding"/>
    <property type="evidence" value="ECO:0007669"/>
    <property type="project" value="UniProtKB-KW"/>
</dbReference>
<dbReference type="GO" id="GO:0006351">
    <property type="term" value="P:DNA-templated transcription"/>
    <property type="evidence" value="ECO:0007669"/>
    <property type="project" value="InterPro"/>
</dbReference>
<dbReference type="Gene3D" id="1.10.40.90">
    <property type="match status" value="1"/>
</dbReference>
<dbReference type="Gene3D" id="2.40.40.20">
    <property type="match status" value="1"/>
</dbReference>
<dbReference type="Gene3D" id="1.10.274.100">
    <property type="entry name" value="RNA polymerase Rpb1, domain 3"/>
    <property type="match status" value="1"/>
</dbReference>
<dbReference type="InterPro" id="IPR045867">
    <property type="entry name" value="DNA-dir_RpoC_beta_prime"/>
</dbReference>
<dbReference type="InterPro" id="IPR000722">
    <property type="entry name" value="RNA_pol_asu"/>
</dbReference>
<dbReference type="InterPro" id="IPR006592">
    <property type="entry name" value="RNA_pol_N"/>
</dbReference>
<dbReference type="InterPro" id="IPR007080">
    <property type="entry name" value="RNA_pol_Rpb1_1"/>
</dbReference>
<dbReference type="InterPro" id="IPR007066">
    <property type="entry name" value="RNA_pol_Rpb1_3"/>
</dbReference>
<dbReference type="InterPro" id="IPR042102">
    <property type="entry name" value="RNA_pol_Rpb1_3_sf"/>
</dbReference>
<dbReference type="PANTHER" id="PTHR19376">
    <property type="entry name" value="DNA-DIRECTED RNA POLYMERASE"/>
    <property type="match status" value="1"/>
</dbReference>
<dbReference type="PANTHER" id="PTHR19376:SF54">
    <property type="entry name" value="DNA-DIRECTED RNA POLYMERASE SUBUNIT BETA"/>
    <property type="match status" value="1"/>
</dbReference>
<dbReference type="Pfam" id="PF04997">
    <property type="entry name" value="RNA_pol_Rpb1_1"/>
    <property type="match status" value="1"/>
</dbReference>
<dbReference type="Pfam" id="PF00623">
    <property type="entry name" value="RNA_pol_Rpb1_2"/>
    <property type="match status" value="2"/>
</dbReference>
<dbReference type="Pfam" id="PF04983">
    <property type="entry name" value="RNA_pol_Rpb1_3"/>
    <property type="match status" value="1"/>
</dbReference>
<dbReference type="SMART" id="SM00663">
    <property type="entry name" value="RPOLA_N"/>
    <property type="match status" value="1"/>
</dbReference>
<dbReference type="SUPFAM" id="SSF64484">
    <property type="entry name" value="beta and beta-prime subunits of DNA dependent RNA-polymerase"/>
    <property type="match status" value="1"/>
</dbReference>
<keyword id="KW-0150">Chloroplast</keyword>
<keyword id="KW-0240">DNA-directed RNA polymerase</keyword>
<keyword id="KW-0460">Magnesium</keyword>
<keyword id="KW-0479">Metal-binding</keyword>
<keyword id="KW-0548">Nucleotidyltransferase</keyword>
<keyword id="KW-0934">Plastid</keyword>
<keyword id="KW-1185">Reference proteome</keyword>
<keyword id="KW-0804">Transcription</keyword>
<keyword id="KW-0808">Transferase</keyword>
<accession>Q8HUH0</accession>
<accession>B7U1K9</accession>
<protein>
    <recommendedName>
        <fullName>DNA-directed RNA polymerase subunit beta' C-terminal section</fullName>
        <ecNumber>2.7.7.6</ecNumber>
    </recommendedName>
    <alternativeName>
        <fullName>PEP</fullName>
    </alternativeName>
    <alternativeName>
        <fullName>Plastid-encoded RNA polymerase beta' C-terminal section</fullName>
        <shortName>RNA polymerase beta' C-terminal section</shortName>
    </alternativeName>
</protein>
<reference key="1">
    <citation type="journal article" date="2002" name="Plant Cell">
        <title>The Chlamydomonas reinhardtii plastid chromosome: islands of genes in a sea of repeats.</title>
        <authorList>
            <person name="Maul J.E."/>
            <person name="Lilly J.W."/>
            <person name="Cui L."/>
            <person name="dePamphilis C.W."/>
            <person name="Miller W."/>
            <person name="Harris E.H."/>
            <person name="Stern D.B."/>
        </authorList>
    </citation>
    <scope>NUCLEOTIDE SEQUENCE [LARGE SCALE GENOMIC DNA]</scope>
    <scope>IDENTIFICATION</scope>
    <scope>COMPLETE PLASTID GENOME</scope>
</reference>
<reference key="2">
    <citation type="journal article" date="2009" name="BMC Evol. Biol.">
        <title>Nucleotide diversity of the Chlamydomonas reinhardtii plastid genome: addressing the mutational-hazard hypothesis.</title>
        <authorList>
            <person name="Smith D.R."/>
            <person name="Lee R.W."/>
        </authorList>
    </citation>
    <scope>NUCLEOTIDE SEQUENCE [LARGE SCALE GENOMIC DNA]</scope>
    <source>
        <strain>CC-503</strain>
    </source>
</reference>
<feature type="chain" id="PRO_0000067867" description="DNA-directed RNA polymerase subunit beta' C-terminal section">
    <location>
        <begin position="1"/>
        <end position="489"/>
    </location>
</feature>
<feature type="binding site" evidence="2">
    <location>
        <position position="208"/>
    </location>
    <ligand>
        <name>Mg(2+)</name>
        <dbReference type="ChEBI" id="CHEBI:18420"/>
    </ligand>
</feature>
<feature type="binding site" evidence="2">
    <location>
        <position position="210"/>
    </location>
    <ligand>
        <name>Mg(2+)</name>
        <dbReference type="ChEBI" id="CHEBI:18420"/>
    </ligand>
</feature>
<feature type="binding site" evidence="2">
    <location>
        <position position="212"/>
    </location>
    <ligand>
        <name>Mg(2+)</name>
        <dbReference type="ChEBI" id="CHEBI:18420"/>
    </ligand>
</feature>
<organism>
    <name type="scientific">Chlamydomonas reinhardtii</name>
    <name type="common">Chlamydomonas smithii</name>
    <dbReference type="NCBI Taxonomy" id="3055"/>
    <lineage>
        <taxon>Eukaryota</taxon>
        <taxon>Viridiplantae</taxon>
        <taxon>Chlorophyta</taxon>
        <taxon>core chlorophytes</taxon>
        <taxon>Chlorophyceae</taxon>
        <taxon>CS clade</taxon>
        <taxon>Chlamydomonadales</taxon>
        <taxon>Chlamydomonadaceae</taxon>
        <taxon>Chlamydomonas</taxon>
    </lineage>
</organism>
<proteinExistence type="evidence at transcript level"/>